<proteinExistence type="evidence at protein level"/>
<dbReference type="EMBL" id="EU038803">
    <property type="protein sequence ID" value="ABW06103.2"/>
    <property type="molecule type" value="mRNA"/>
</dbReference>
<dbReference type="EMBL" id="CM001222">
    <property type="protein sequence ID" value="AES75163.1"/>
    <property type="molecule type" value="Genomic_DNA"/>
</dbReference>
<dbReference type="RefSeq" id="XP_003618945.1">
    <property type="nucleotide sequence ID" value="XM_003618897.2"/>
</dbReference>
<dbReference type="SMR" id="A9Y0K8"/>
<dbReference type="STRING" id="3880.A9Y0K8"/>
<dbReference type="PaxDb" id="3880-AES75163"/>
<dbReference type="EnsemblPlants" id="rna35115">
    <property type="protein sequence ID" value="RHN50787.1"/>
    <property type="gene ID" value="gene35115"/>
</dbReference>
<dbReference type="GeneID" id="11417172"/>
<dbReference type="Gramene" id="rna35115">
    <property type="protein sequence ID" value="RHN50787.1"/>
    <property type="gene ID" value="gene35115"/>
</dbReference>
<dbReference type="KEGG" id="mtr:11417172"/>
<dbReference type="eggNOG" id="ENOG502QSNC">
    <property type="taxonomic scope" value="Eukaryota"/>
</dbReference>
<dbReference type="HOGENOM" id="CLU_056266_0_0_1"/>
<dbReference type="OMA" id="TTQNIRM"/>
<dbReference type="OrthoDB" id="1428565at2759"/>
<dbReference type="Proteomes" id="UP000002051">
    <property type="component" value="Chromosome 6"/>
</dbReference>
<dbReference type="ExpressionAtlas" id="A9Y0K8">
    <property type="expression patterns" value="differential"/>
</dbReference>
<dbReference type="GO" id="GO:0005634">
    <property type="term" value="C:nucleus"/>
    <property type="evidence" value="ECO:0000314"/>
    <property type="project" value="UniProtKB"/>
</dbReference>
<dbReference type="GO" id="GO:0003700">
    <property type="term" value="F:DNA-binding transcription factor activity"/>
    <property type="evidence" value="ECO:0007669"/>
    <property type="project" value="InterPro"/>
</dbReference>
<dbReference type="GO" id="GO:0043565">
    <property type="term" value="F:sequence-specific DNA binding"/>
    <property type="evidence" value="ECO:0000314"/>
    <property type="project" value="UniProtKB"/>
</dbReference>
<dbReference type="GO" id="GO:0009877">
    <property type="term" value="P:nodulation"/>
    <property type="evidence" value="ECO:0000315"/>
    <property type="project" value="UniProtKB"/>
</dbReference>
<dbReference type="GO" id="GO:0045893">
    <property type="term" value="P:positive regulation of DNA-templated transcription"/>
    <property type="evidence" value="ECO:0000314"/>
    <property type="project" value="UniProtKB"/>
</dbReference>
<dbReference type="CDD" id="cd00018">
    <property type="entry name" value="AP2"/>
    <property type="match status" value="1"/>
</dbReference>
<dbReference type="FunFam" id="3.30.730.10:FF:000005">
    <property type="entry name" value="ethylene-responsive transcription factor RAP2-11"/>
    <property type="match status" value="1"/>
</dbReference>
<dbReference type="Gene3D" id="3.30.730.10">
    <property type="entry name" value="AP2/ERF domain"/>
    <property type="match status" value="1"/>
</dbReference>
<dbReference type="InterPro" id="IPR001471">
    <property type="entry name" value="AP2/ERF_dom"/>
</dbReference>
<dbReference type="InterPro" id="IPR036955">
    <property type="entry name" value="AP2/ERF_dom_sf"/>
</dbReference>
<dbReference type="InterPro" id="IPR050913">
    <property type="entry name" value="AP2/ERF_ERF_subfamily"/>
</dbReference>
<dbReference type="InterPro" id="IPR016177">
    <property type="entry name" value="DNA-bd_dom_sf"/>
</dbReference>
<dbReference type="PANTHER" id="PTHR31194:SF1">
    <property type="entry name" value="ETHYLENE-RESPONSIVE TRANSCRIPTION FACTOR ERN2"/>
    <property type="match status" value="1"/>
</dbReference>
<dbReference type="PANTHER" id="PTHR31194">
    <property type="entry name" value="SHN SHINE , DNA BINDING / TRANSCRIPTION FACTOR"/>
    <property type="match status" value="1"/>
</dbReference>
<dbReference type="Pfam" id="PF00847">
    <property type="entry name" value="AP2"/>
    <property type="match status" value="1"/>
</dbReference>
<dbReference type="PRINTS" id="PR00367">
    <property type="entry name" value="ETHRSPELEMNT"/>
</dbReference>
<dbReference type="SMART" id="SM00380">
    <property type="entry name" value="AP2"/>
    <property type="match status" value="1"/>
</dbReference>
<dbReference type="SUPFAM" id="SSF54171">
    <property type="entry name" value="DNA-binding domain"/>
    <property type="match status" value="1"/>
</dbReference>
<dbReference type="PROSITE" id="PS51032">
    <property type="entry name" value="AP2_ERF"/>
    <property type="match status" value="1"/>
</dbReference>
<organism>
    <name type="scientific">Medicago truncatula</name>
    <name type="common">Barrel medic</name>
    <name type="synonym">Medicago tribuloides</name>
    <dbReference type="NCBI Taxonomy" id="3880"/>
    <lineage>
        <taxon>Eukaryota</taxon>
        <taxon>Viridiplantae</taxon>
        <taxon>Streptophyta</taxon>
        <taxon>Embryophyta</taxon>
        <taxon>Tracheophyta</taxon>
        <taxon>Spermatophyta</taxon>
        <taxon>Magnoliopsida</taxon>
        <taxon>eudicotyledons</taxon>
        <taxon>Gunneridae</taxon>
        <taxon>Pentapetalae</taxon>
        <taxon>rosids</taxon>
        <taxon>fabids</taxon>
        <taxon>Fabales</taxon>
        <taxon>Fabaceae</taxon>
        <taxon>Papilionoideae</taxon>
        <taxon>50 kb inversion clade</taxon>
        <taxon>NPAAA clade</taxon>
        <taxon>Hologalegina</taxon>
        <taxon>IRL clade</taxon>
        <taxon>Trifolieae</taxon>
        <taxon>Medicago</taxon>
    </lineage>
</organism>
<accession>A9Y0K8</accession>
<reference key="1">
    <citation type="journal article" date="2007" name="Plant Cell">
        <title>AP2-ERF transcription factors mediate Nod factor dependent Mt ENOD11 activation in root hairs via a novel cis-regulatory motif.</title>
        <authorList>
            <person name="Andriankaja A."/>
            <person name="Boisson-Dernier A."/>
            <person name="Frances L."/>
            <person name="Sauviac L."/>
            <person name="Jauneau A."/>
            <person name="Barker D.G."/>
            <person name="de Carvalho-Niebel F."/>
        </authorList>
    </citation>
    <scope>NUCLEOTIDE SEQUENCE [MRNA]</scope>
    <scope>FUNCTION</scope>
    <scope>SUBCELLULAR LOCATION</scope>
    <scope>TISSUE SPECIFICITY</scope>
    <scope>INDUCTION BY NOD FACTORS</scope>
</reference>
<reference key="2">
    <citation type="journal article" date="2011" name="Nature">
        <title>The Medicago genome provides insight into the evolution of rhizobial symbioses.</title>
        <authorList>
            <person name="Young N.D."/>
            <person name="Debelle F."/>
            <person name="Oldroyd G.E.D."/>
            <person name="Geurts R."/>
            <person name="Cannon S.B."/>
            <person name="Udvardi M.K."/>
            <person name="Benedito V.A."/>
            <person name="Mayer K.F.X."/>
            <person name="Gouzy J."/>
            <person name="Schoof H."/>
            <person name="Van de Peer Y."/>
            <person name="Proost S."/>
            <person name="Cook D.R."/>
            <person name="Meyers B.C."/>
            <person name="Spannagl M."/>
            <person name="Cheung F."/>
            <person name="De Mita S."/>
            <person name="Krishnakumar V."/>
            <person name="Gundlach H."/>
            <person name="Zhou S."/>
            <person name="Mudge J."/>
            <person name="Bharti A.K."/>
            <person name="Murray J.D."/>
            <person name="Naoumkina M.A."/>
            <person name="Rosen B."/>
            <person name="Silverstein K.A.T."/>
            <person name="Tang H."/>
            <person name="Rombauts S."/>
            <person name="Zhao P.X."/>
            <person name="Zhou P."/>
            <person name="Barbe V."/>
            <person name="Bardou P."/>
            <person name="Bechner M."/>
            <person name="Bellec A."/>
            <person name="Berger A."/>
            <person name="Berges H."/>
            <person name="Bidwell S."/>
            <person name="Bisseling T."/>
            <person name="Choisne N."/>
            <person name="Couloux A."/>
            <person name="Denny R."/>
            <person name="Deshpande S."/>
            <person name="Dai X."/>
            <person name="Doyle J.J."/>
            <person name="Dudez A.-M."/>
            <person name="Farmer A.D."/>
            <person name="Fouteau S."/>
            <person name="Franken C."/>
            <person name="Gibelin C."/>
            <person name="Gish J."/>
            <person name="Goldstein S."/>
            <person name="Gonzalez A.J."/>
            <person name="Green P.J."/>
            <person name="Hallab A."/>
            <person name="Hartog M."/>
            <person name="Hua A."/>
            <person name="Humphray S.J."/>
            <person name="Jeong D.-H."/>
            <person name="Jing Y."/>
            <person name="Jocker A."/>
            <person name="Kenton S.M."/>
            <person name="Kim D.-J."/>
            <person name="Klee K."/>
            <person name="Lai H."/>
            <person name="Lang C."/>
            <person name="Lin S."/>
            <person name="Macmil S.L."/>
            <person name="Magdelenat G."/>
            <person name="Matthews L."/>
            <person name="McCorrison J."/>
            <person name="Monaghan E.L."/>
            <person name="Mun J.-H."/>
            <person name="Najar F.Z."/>
            <person name="Nicholson C."/>
            <person name="Noirot C."/>
            <person name="O'Bleness M."/>
            <person name="Paule C.R."/>
            <person name="Poulain J."/>
            <person name="Prion F."/>
            <person name="Qin B."/>
            <person name="Qu C."/>
            <person name="Retzel E.F."/>
            <person name="Riddle C."/>
            <person name="Sallet E."/>
            <person name="Samain S."/>
            <person name="Samson N."/>
            <person name="Sanders I."/>
            <person name="Saurat O."/>
            <person name="Scarpelli C."/>
            <person name="Schiex T."/>
            <person name="Segurens B."/>
            <person name="Severin A.J."/>
            <person name="Sherrier D.J."/>
            <person name="Shi R."/>
            <person name="Sims S."/>
            <person name="Singer S.R."/>
            <person name="Sinharoy S."/>
            <person name="Sterck L."/>
            <person name="Viollet A."/>
            <person name="Wang B.-B."/>
            <person name="Wang K."/>
            <person name="Wang M."/>
            <person name="Wang X."/>
            <person name="Warfsmann J."/>
            <person name="Weissenbach J."/>
            <person name="White D.D."/>
            <person name="White J.D."/>
            <person name="Wiley G.B."/>
            <person name="Wincker P."/>
            <person name="Xing Y."/>
            <person name="Yang L."/>
            <person name="Yao Z."/>
            <person name="Ying F."/>
            <person name="Zhai J."/>
            <person name="Zhou L."/>
            <person name="Zuber A."/>
            <person name="Denarie J."/>
            <person name="Dixon R.A."/>
            <person name="May G.D."/>
            <person name="Schwartz D.C."/>
            <person name="Rogers J."/>
            <person name="Quetier F."/>
            <person name="Town C.D."/>
            <person name="Roe B.A."/>
        </authorList>
    </citation>
    <scope>NUCLEOTIDE SEQUENCE [LARGE SCALE GENOMIC DNA]</scope>
    <source>
        <strain>cv. Jemalong A17</strain>
    </source>
</reference>
<reference key="3">
    <citation type="journal article" date="2014" name="BMC Genomics">
        <title>An improved genome release (version Mt4.0) for the model legume Medicago truncatula.</title>
        <authorList>
            <person name="Tang H."/>
            <person name="Krishnakumar V."/>
            <person name="Bidwell S."/>
            <person name="Rosen B."/>
            <person name="Chan A."/>
            <person name="Zhou S."/>
            <person name="Gentzbittel L."/>
            <person name="Childs K.L."/>
            <person name="Yandell M."/>
            <person name="Gundlach H."/>
            <person name="Mayer K.F."/>
            <person name="Schwartz D.C."/>
            <person name="Town C.D."/>
        </authorList>
    </citation>
    <scope>GENOME REANNOTATION</scope>
    <source>
        <strain>cv. Jemalong A17</strain>
    </source>
</reference>
<reference key="4">
    <citation type="journal article" date="2012" name="Plant Physiol.">
        <title>Medicago truncatula ERN transcription factors: regulatory interplay with NSP1/NSP2 GRAS factors and expression dynamics throughout rhizobial infection.</title>
        <authorList>
            <person name="Cerri M.R."/>
            <person name="Frances L."/>
            <person name="Laloum T."/>
            <person name="Auriac M.C."/>
            <person name="Niebel A."/>
            <person name="Oldroyd G.E."/>
            <person name="Barker D.G."/>
            <person name="Fournier J."/>
            <person name="de Carvalho-Niebel F."/>
        </authorList>
    </citation>
    <scope>FUNCTION</scope>
    <scope>SUBCELLULAR LOCATION</scope>
    <scope>TISSUE SPECIFICITY</scope>
</reference>
<reference key="5">
    <citation type="journal article" date="2016" name="Plant Physiol.">
        <title>The symbiosis-related ERN transcription factors act in concert to coordinate rhizobial host root infection.</title>
        <authorList>
            <person name="Cerri M.R."/>
            <person name="Frances L."/>
            <person name="Kelner A."/>
            <person name="Fournier J."/>
            <person name="Middleton P.H."/>
            <person name="Auriac M.C."/>
            <person name="Mysore K.S."/>
            <person name="Wen J."/>
            <person name="Erard M."/>
            <person name="Barker D.G."/>
            <person name="Oldroyd G.E."/>
            <person name="de Carvalho-Niebel F."/>
        </authorList>
    </citation>
    <scope>FUNCTION</scope>
    <scope>MUTAGENESIS OF THR-61</scope>
</reference>
<feature type="chain" id="PRO_0000444708" description="Ethylene-responsive transcription factor ERN2">
    <location>
        <begin position="1"/>
        <end position="313"/>
    </location>
</feature>
<feature type="DNA-binding region" description="AP2/ERF" evidence="1">
    <location>
        <begin position="32"/>
        <end position="89"/>
    </location>
</feature>
<feature type="region of interest" description="Disordered" evidence="2">
    <location>
        <begin position="1"/>
        <end position="29"/>
    </location>
</feature>
<feature type="region of interest" description="Disordered" evidence="2">
    <location>
        <begin position="108"/>
        <end position="143"/>
    </location>
</feature>
<feature type="region of interest" description="Disordered" evidence="2">
    <location>
        <begin position="157"/>
        <end position="204"/>
    </location>
</feature>
<feature type="compositionally biased region" description="Basic and acidic residues" evidence="2">
    <location>
        <begin position="1"/>
        <end position="10"/>
    </location>
</feature>
<feature type="compositionally biased region" description="Basic residues" evidence="2">
    <location>
        <begin position="11"/>
        <end position="24"/>
    </location>
</feature>
<feature type="compositionally biased region" description="Low complexity" evidence="2">
    <location>
        <begin position="122"/>
        <end position="143"/>
    </location>
</feature>
<feature type="compositionally biased region" description="Low complexity" evidence="2">
    <location>
        <begin position="157"/>
        <end position="193"/>
    </location>
</feature>
<feature type="mutagenesis site" description="In ern2-1; reduced colonization of roots by rhizobia, but still able to form nitrogen-fixing nodules with premature senescence of the nodules." evidence="5">
    <original>T</original>
    <variation>I</variation>
    <location>
        <position position="61"/>
    </location>
</feature>
<gene>
    <name evidence="6" type="primary">ERN2</name>
    <name evidence="6" type="synonym">NFbB2</name>
    <name evidence="8" type="ordered locus">MTR_6g029180</name>
</gene>
<evidence type="ECO:0000255" key="1">
    <source>
        <dbReference type="PROSITE-ProRule" id="PRU00366"/>
    </source>
</evidence>
<evidence type="ECO:0000256" key="2">
    <source>
        <dbReference type="SAM" id="MobiDB-lite"/>
    </source>
</evidence>
<evidence type="ECO:0000269" key="3">
    <source>
    </source>
</evidence>
<evidence type="ECO:0000269" key="4">
    <source>
    </source>
</evidence>
<evidence type="ECO:0000269" key="5">
    <source>
    </source>
</evidence>
<evidence type="ECO:0000303" key="6">
    <source>
    </source>
</evidence>
<evidence type="ECO:0000305" key="7"/>
<evidence type="ECO:0000312" key="8">
    <source>
        <dbReference type="EMBL" id="AES75163.1"/>
    </source>
</evidence>
<comment type="function">
    <text evidence="3 4 5">Transcription factor involved in symbiotic nodule signaling in response to rhizobial Nod factors (NFs). Binds to the GCC box (NF-responsive box) of ENOD11 promoter. Acts as a transcriptional activator of NF-responsive box-containing target gene promoters in root hairs (PubMed:17827349). Involved in early stages of root nodule development. Functions redundantly with ERN1. Is essential with ERN1 for the initiation of root hair infection, and nodule organogenesis and development. Required for accurate expression of the NF signaling genes ENOD11 and ENOD12 (PubMed:23077241, PubMed:27208242).</text>
</comment>
<comment type="subcellular location">
    <subcellularLocation>
        <location evidence="1 3 4">Nucleus</location>
    </subcellularLocation>
</comment>
<comment type="tissue specificity">
    <text evidence="3 4">Expressed in roots, root hairs and leaves (PubMed:17827349). Expressed in root epidermis and root hairs (PubMed:23077241).</text>
</comment>
<comment type="induction">
    <text evidence="3">Induced by Nod factors in root hairs.</text>
</comment>
<comment type="similarity">
    <text evidence="7">Belongs to the AP2/ERF transcription factor family. ERF subfamily.</text>
</comment>
<protein>
    <recommendedName>
        <fullName evidence="7">Ethylene-responsive transcription factor ERN2</fullName>
        <shortName evidence="7">ERF transcription factor ERN2</shortName>
    </recommendedName>
    <alternativeName>
        <fullName evidence="6">NF box-binding protein 2</fullName>
    </alternativeName>
    <alternativeName>
        <fullName evidence="6">Protein ERF REQUIRED FOR NODULATION 2</fullName>
    </alternativeName>
</protein>
<name>ERN2_MEDTR</name>
<keyword id="KW-0238">DNA-binding</keyword>
<keyword id="KW-0536">Nodulation</keyword>
<keyword id="KW-0539">Nucleus</keyword>
<keyword id="KW-1185">Reference proteome</keyword>
<keyword id="KW-0804">Transcription</keyword>
<keyword id="KW-0805">Transcription regulation</keyword>
<sequence>MEIQFDEPKKSLRPKKVNKFKGRNKKSETRDKFVGVRQRPSGRYVAEIKDTTQNIRMWLGTFETAEEAARAYDEAATLLRGSKTRTNFVTHVSYDSPLASRIRHLLNNRKKGTKQQDMNGISSTTSHADTTNDTTSDGSTSSTTNCIGTASGAINSTSASGVTSTSTNISTSASGVASTSTDISTNSSNTNVNDKSESLLSSSTTMQKPNLFEDAYRPDMSNLTNEYESSSYKSNVSWDFGPIFDNFPFDQWLDMTNNDGLLCDMVDKGVSEFERMKVERQISASLYAINGVQEYMKNVQDCNEAQWNLSPLC</sequence>